<feature type="chain" id="PRO_0000141171" description="Ribose-phosphate pyrophosphokinase">
    <location>
        <begin position="1"/>
        <end position="315"/>
    </location>
</feature>
<feature type="active site" evidence="1">
    <location>
        <position position="194"/>
    </location>
</feature>
<feature type="binding site" evidence="1">
    <location>
        <begin position="37"/>
        <end position="39"/>
    </location>
    <ligand>
        <name>ATP</name>
        <dbReference type="ChEBI" id="CHEBI:30616"/>
    </ligand>
</feature>
<feature type="binding site" evidence="1">
    <location>
        <begin position="96"/>
        <end position="97"/>
    </location>
    <ligand>
        <name>ATP</name>
        <dbReference type="ChEBI" id="CHEBI:30616"/>
    </ligand>
</feature>
<feature type="binding site" evidence="1">
    <location>
        <position position="131"/>
    </location>
    <ligand>
        <name>Mg(2+)</name>
        <dbReference type="ChEBI" id="CHEBI:18420"/>
        <label>1</label>
    </ligand>
</feature>
<feature type="binding site" evidence="1">
    <location>
        <position position="170"/>
    </location>
    <ligand>
        <name>Mg(2+)</name>
        <dbReference type="ChEBI" id="CHEBI:18420"/>
        <label>2</label>
    </ligand>
</feature>
<feature type="binding site" evidence="1">
    <location>
        <position position="196"/>
    </location>
    <ligand>
        <name>D-ribose 5-phosphate</name>
        <dbReference type="ChEBI" id="CHEBI:78346"/>
    </ligand>
</feature>
<feature type="binding site" evidence="1">
    <location>
        <position position="220"/>
    </location>
    <ligand>
        <name>D-ribose 5-phosphate</name>
        <dbReference type="ChEBI" id="CHEBI:78346"/>
    </ligand>
</feature>
<feature type="binding site" evidence="1">
    <location>
        <begin position="224"/>
        <end position="228"/>
    </location>
    <ligand>
        <name>D-ribose 5-phosphate</name>
        <dbReference type="ChEBI" id="CHEBI:78346"/>
    </ligand>
</feature>
<organism>
    <name type="scientific">Photorhabdus laumondii subsp. laumondii (strain DSM 15139 / CIP 105565 / TT01)</name>
    <name type="common">Photorhabdus luminescens subsp. laumondii</name>
    <dbReference type="NCBI Taxonomy" id="243265"/>
    <lineage>
        <taxon>Bacteria</taxon>
        <taxon>Pseudomonadati</taxon>
        <taxon>Pseudomonadota</taxon>
        <taxon>Gammaproteobacteria</taxon>
        <taxon>Enterobacterales</taxon>
        <taxon>Morganellaceae</taxon>
        <taxon>Photorhabdus</taxon>
    </lineage>
</organism>
<reference key="1">
    <citation type="journal article" date="2003" name="Nat. Biotechnol.">
        <title>The genome sequence of the entomopathogenic bacterium Photorhabdus luminescens.</title>
        <authorList>
            <person name="Duchaud E."/>
            <person name="Rusniok C."/>
            <person name="Frangeul L."/>
            <person name="Buchrieser C."/>
            <person name="Givaudan A."/>
            <person name="Taourit S."/>
            <person name="Bocs S."/>
            <person name="Boursaux-Eude C."/>
            <person name="Chandler M."/>
            <person name="Charles J.-F."/>
            <person name="Dassa E."/>
            <person name="Derose R."/>
            <person name="Derzelle S."/>
            <person name="Freyssinet G."/>
            <person name="Gaudriault S."/>
            <person name="Medigue C."/>
            <person name="Lanois A."/>
            <person name="Powell K."/>
            <person name="Siguier P."/>
            <person name="Vincent R."/>
            <person name="Wingate V."/>
            <person name="Zouine M."/>
            <person name="Glaser P."/>
            <person name="Boemare N."/>
            <person name="Danchin A."/>
            <person name="Kunst F."/>
        </authorList>
    </citation>
    <scope>NUCLEOTIDE SEQUENCE [LARGE SCALE GENOMIC DNA]</scope>
    <source>
        <strain>DSM 15139 / CIP 105565 / TT01</strain>
    </source>
</reference>
<name>KPRS_PHOLL</name>
<gene>
    <name evidence="1" type="primary">prs</name>
    <name type="synonym">prsA</name>
    <name type="ordered locus">plu2066</name>
</gene>
<dbReference type="EC" id="2.7.6.1" evidence="1"/>
<dbReference type="EMBL" id="BX571866">
    <property type="protein sequence ID" value="CAE14359.1"/>
    <property type="molecule type" value="Genomic_DNA"/>
</dbReference>
<dbReference type="SMR" id="Q7N590"/>
<dbReference type="STRING" id="243265.plu2066"/>
<dbReference type="KEGG" id="plu:plu2066"/>
<dbReference type="eggNOG" id="COG0462">
    <property type="taxonomic scope" value="Bacteria"/>
</dbReference>
<dbReference type="HOGENOM" id="CLU_033546_2_0_6"/>
<dbReference type="OrthoDB" id="9777067at2"/>
<dbReference type="UniPathway" id="UPA00087">
    <property type="reaction ID" value="UER00172"/>
</dbReference>
<dbReference type="Proteomes" id="UP000002514">
    <property type="component" value="Chromosome"/>
</dbReference>
<dbReference type="GO" id="GO:0005737">
    <property type="term" value="C:cytoplasm"/>
    <property type="evidence" value="ECO:0007669"/>
    <property type="project" value="UniProtKB-SubCell"/>
</dbReference>
<dbReference type="GO" id="GO:0002189">
    <property type="term" value="C:ribose phosphate diphosphokinase complex"/>
    <property type="evidence" value="ECO:0007669"/>
    <property type="project" value="TreeGrafter"/>
</dbReference>
<dbReference type="GO" id="GO:0005524">
    <property type="term" value="F:ATP binding"/>
    <property type="evidence" value="ECO:0007669"/>
    <property type="project" value="UniProtKB-KW"/>
</dbReference>
<dbReference type="GO" id="GO:0016301">
    <property type="term" value="F:kinase activity"/>
    <property type="evidence" value="ECO:0007669"/>
    <property type="project" value="UniProtKB-KW"/>
</dbReference>
<dbReference type="GO" id="GO:0000287">
    <property type="term" value="F:magnesium ion binding"/>
    <property type="evidence" value="ECO:0007669"/>
    <property type="project" value="UniProtKB-UniRule"/>
</dbReference>
<dbReference type="GO" id="GO:0004749">
    <property type="term" value="F:ribose phosphate diphosphokinase activity"/>
    <property type="evidence" value="ECO:0007669"/>
    <property type="project" value="UniProtKB-UniRule"/>
</dbReference>
<dbReference type="GO" id="GO:0006015">
    <property type="term" value="P:5-phosphoribose 1-diphosphate biosynthetic process"/>
    <property type="evidence" value="ECO:0007669"/>
    <property type="project" value="UniProtKB-UniRule"/>
</dbReference>
<dbReference type="GO" id="GO:0006164">
    <property type="term" value="P:purine nucleotide biosynthetic process"/>
    <property type="evidence" value="ECO:0007669"/>
    <property type="project" value="TreeGrafter"/>
</dbReference>
<dbReference type="GO" id="GO:0009156">
    <property type="term" value="P:ribonucleoside monophosphate biosynthetic process"/>
    <property type="evidence" value="ECO:0007669"/>
    <property type="project" value="InterPro"/>
</dbReference>
<dbReference type="CDD" id="cd06223">
    <property type="entry name" value="PRTases_typeI"/>
    <property type="match status" value="1"/>
</dbReference>
<dbReference type="FunFam" id="3.40.50.2020:FF:000001">
    <property type="entry name" value="Ribose-phosphate pyrophosphokinase"/>
    <property type="match status" value="1"/>
</dbReference>
<dbReference type="Gene3D" id="3.40.50.2020">
    <property type="match status" value="2"/>
</dbReference>
<dbReference type="HAMAP" id="MF_00583_B">
    <property type="entry name" value="RibP_PPkinase_B"/>
    <property type="match status" value="1"/>
</dbReference>
<dbReference type="InterPro" id="IPR000842">
    <property type="entry name" value="PRib_PP_synth_CS"/>
</dbReference>
<dbReference type="InterPro" id="IPR029099">
    <property type="entry name" value="Pribosyltran_N"/>
</dbReference>
<dbReference type="InterPro" id="IPR000836">
    <property type="entry name" value="PRibTrfase_dom"/>
</dbReference>
<dbReference type="InterPro" id="IPR029057">
    <property type="entry name" value="PRTase-like"/>
</dbReference>
<dbReference type="InterPro" id="IPR005946">
    <property type="entry name" value="Rib-P_diPkinase"/>
</dbReference>
<dbReference type="InterPro" id="IPR037515">
    <property type="entry name" value="Rib-P_diPkinase_bac"/>
</dbReference>
<dbReference type="NCBIfam" id="NF002320">
    <property type="entry name" value="PRK01259.1"/>
    <property type="match status" value="1"/>
</dbReference>
<dbReference type="NCBIfam" id="TIGR01251">
    <property type="entry name" value="ribP_PPkin"/>
    <property type="match status" value="1"/>
</dbReference>
<dbReference type="PANTHER" id="PTHR10210">
    <property type="entry name" value="RIBOSE-PHOSPHATE DIPHOSPHOKINASE FAMILY MEMBER"/>
    <property type="match status" value="1"/>
</dbReference>
<dbReference type="PANTHER" id="PTHR10210:SF41">
    <property type="entry name" value="RIBOSE-PHOSPHATE PYROPHOSPHOKINASE 1, CHLOROPLASTIC"/>
    <property type="match status" value="1"/>
</dbReference>
<dbReference type="Pfam" id="PF14572">
    <property type="entry name" value="Pribosyl_synth"/>
    <property type="match status" value="1"/>
</dbReference>
<dbReference type="Pfam" id="PF13793">
    <property type="entry name" value="Pribosyltran_N"/>
    <property type="match status" value="1"/>
</dbReference>
<dbReference type="SMART" id="SM01400">
    <property type="entry name" value="Pribosyltran_N"/>
    <property type="match status" value="1"/>
</dbReference>
<dbReference type="SUPFAM" id="SSF53271">
    <property type="entry name" value="PRTase-like"/>
    <property type="match status" value="1"/>
</dbReference>
<dbReference type="PROSITE" id="PS00114">
    <property type="entry name" value="PRPP_SYNTHASE"/>
    <property type="match status" value="1"/>
</dbReference>
<proteinExistence type="inferred from homology"/>
<evidence type="ECO:0000255" key="1">
    <source>
        <dbReference type="HAMAP-Rule" id="MF_00583"/>
    </source>
</evidence>
<comment type="function">
    <text evidence="1">Involved in the biosynthesis of the central metabolite phospho-alpha-D-ribosyl-1-pyrophosphate (PRPP) via the transfer of pyrophosphoryl group from ATP to 1-hydroxyl of ribose-5-phosphate (Rib-5-P).</text>
</comment>
<comment type="catalytic activity">
    <reaction evidence="1">
        <text>D-ribose 5-phosphate + ATP = 5-phospho-alpha-D-ribose 1-diphosphate + AMP + H(+)</text>
        <dbReference type="Rhea" id="RHEA:15609"/>
        <dbReference type="ChEBI" id="CHEBI:15378"/>
        <dbReference type="ChEBI" id="CHEBI:30616"/>
        <dbReference type="ChEBI" id="CHEBI:58017"/>
        <dbReference type="ChEBI" id="CHEBI:78346"/>
        <dbReference type="ChEBI" id="CHEBI:456215"/>
        <dbReference type="EC" id="2.7.6.1"/>
    </reaction>
</comment>
<comment type="cofactor">
    <cofactor evidence="1">
        <name>Mg(2+)</name>
        <dbReference type="ChEBI" id="CHEBI:18420"/>
    </cofactor>
    <text evidence="1">Binds 2 Mg(2+) ions per subunit.</text>
</comment>
<comment type="pathway">
    <text evidence="1">Metabolic intermediate biosynthesis; 5-phospho-alpha-D-ribose 1-diphosphate biosynthesis; 5-phospho-alpha-D-ribose 1-diphosphate from D-ribose 5-phosphate (route I): step 1/1.</text>
</comment>
<comment type="subunit">
    <text evidence="1">Homohexamer.</text>
</comment>
<comment type="subcellular location">
    <subcellularLocation>
        <location evidence="1">Cytoplasm</location>
    </subcellularLocation>
</comment>
<comment type="similarity">
    <text evidence="1">Belongs to the ribose-phosphate pyrophosphokinase family. Class I subfamily.</text>
</comment>
<accession>Q7N590</accession>
<sequence>MPDMKLFAGNAIPELAQRVANRLYTNLGDAAVGRFSDGEVSVQVNENVRGGDIFIIQSTCAPTNDNLMELVVMVDALRRASAGRITAVIPYFGYARQDRRVRSARVPITAKVVADFLSSVGVDRVLTVDLHAEQIQGFFDVPVDNVFGSPILLEDMLQKELENPIVVSPDIGGVVRARAIAKLLNDTDMAIIDKRRPRANVSQVMHIIGDVAGRDCVLVDDMIDTGGTLCKAAEALKERGAKRVFAYATHPIFSGNAVDNIKNSVIDEVVVCDTIPLSAEIKALNKVRTLTLSGMLAEAIRRISNEESISAMFEH</sequence>
<keyword id="KW-0067">ATP-binding</keyword>
<keyword id="KW-0963">Cytoplasm</keyword>
<keyword id="KW-0418">Kinase</keyword>
<keyword id="KW-0460">Magnesium</keyword>
<keyword id="KW-0479">Metal-binding</keyword>
<keyword id="KW-0545">Nucleotide biosynthesis</keyword>
<keyword id="KW-0547">Nucleotide-binding</keyword>
<keyword id="KW-1185">Reference proteome</keyword>
<keyword id="KW-0808">Transferase</keyword>
<protein>
    <recommendedName>
        <fullName evidence="1">Ribose-phosphate pyrophosphokinase</fullName>
        <shortName evidence="1">RPPK</shortName>
        <ecNumber evidence="1">2.7.6.1</ecNumber>
    </recommendedName>
    <alternativeName>
        <fullName evidence="1">5-phospho-D-ribosyl alpha-1-diphosphate synthase</fullName>
    </alternativeName>
    <alternativeName>
        <fullName evidence="1">Phosphoribosyl diphosphate synthase</fullName>
    </alternativeName>
    <alternativeName>
        <fullName evidence="1">Phosphoribosyl pyrophosphate synthase</fullName>
        <shortName evidence="1">P-Rib-PP synthase</shortName>
        <shortName evidence="1">PRPP synthase</shortName>
        <shortName evidence="1">PRPPase</shortName>
    </alternativeName>
</protein>